<protein>
    <recommendedName>
        <fullName>Uncharacterized protein ZK1290.10</fullName>
    </recommendedName>
</protein>
<name>YOFA_CAEEL</name>
<organism>
    <name type="scientific">Caenorhabditis elegans</name>
    <dbReference type="NCBI Taxonomy" id="6239"/>
    <lineage>
        <taxon>Eukaryota</taxon>
        <taxon>Metazoa</taxon>
        <taxon>Ecdysozoa</taxon>
        <taxon>Nematoda</taxon>
        <taxon>Chromadorea</taxon>
        <taxon>Rhabditida</taxon>
        <taxon>Rhabditina</taxon>
        <taxon>Rhabditomorpha</taxon>
        <taxon>Rhabditoidea</taxon>
        <taxon>Rhabditidae</taxon>
        <taxon>Peloderinae</taxon>
        <taxon>Caenorhabditis</taxon>
    </lineage>
</organism>
<dbReference type="EMBL" id="FO080700">
    <property type="protein sequence ID" value="CCD65940.1"/>
    <property type="molecule type" value="Genomic_DNA"/>
</dbReference>
<dbReference type="PIR" id="T34510">
    <property type="entry name" value="T34510"/>
</dbReference>
<dbReference type="RefSeq" id="NP_495585.2">
    <property type="nucleotide sequence ID" value="NM_063184.5"/>
</dbReference>
<dbReference type="FunCoup" id="Q09337">
    <property type="interactions" value="1558"/>
</dbReference>
<dbReference type="STRING" id="6239.ZK1290.10.1"/>
<dbReference type="PaxDb" id="6239-ZK1290.10"/>
<dbReference type="EnsemblMetazoa" id="ZK1290.10.1">
    <property type="protein sequence ID" value="ZK1290.10.1"/>
    <property type="gene ID" value="WBGene00022891"/>
</dbReference>
<dbReference type="GeneID" id="191558"/>
<dbReference type="KEGG" id="cel:CELE_ZK1290.10"/>
<dbReference type="UCSC" id="ZK1290.10">
    <property type="organism name" value="c. elegans"/>
</dbReference>
<dbReference type="AGR" id="WB:WBGene00022891"/>
<dbReference type="CTD" id="191558"/>
<dbReference type="WormBase" id="ZK1290.10">
    <property type="protein sequence ID" value="CE36067"/>
    <property type="gene ID" value="WBGene00022891"/>
</dbReference>
<dbReference type="eggNOG" id="ENOG502SD5X">
    <property type="taxonomic scope" value="Eukaryota"/>
</dbReference>
<dbReference type="HOGENOM" id="CLU_042332_0_0_1"/>
<dbReference type="InParanoid" id="Q09337"/>
<dbReference type="OMA" id="KPVVWKK"/>
<dbReference type="OrthoDB" id="5877770at2759"/>
<dbReference type="PRO" id="PR:Q09337"/>
<dbReference type="Proteomes" id="UP000001940">
    <property type="component" value="Chromosome II"/>
</dbReference>
<dbReference type="Bgee" id="WBGene00022891">
    <property type="expression patterns" value="Expressed in pharyngeal muscle cell (C elegans) and 2 other cell types or tissues"/>
</dbReference>
<dbReference type="InterPro" id="IPR003582">
    <property type="entry name" value="ShKT_dom"/>
</dbReference>
<dbReference type="SMART" id="SM00254">
    <property type="entry name" value="ShKT"/>
    <property type="match status" value="1"/>
</dbReference>
<dbReference type="PROSITE" id="PS51670">
    <property type="entry name" value="SHKT"/>
    <property type="match status" value="1"/>
</dbReference>
<accession>Q09337</accession>
<reference key="1">
    <citation type="journal article" date="1998" name="Science">
        <title>Genome sequence of the nematode C. elegans: a platform for investigating biology.</title>
        <authorList>
            <consortium name="The C. elegans sequencing consortium"/>
        </authorList>
    </citation>
    <scope>NUCLEOTIDE SEQUENCE [LARGE SCALE GENOMIC DNA]</scope>
    <source>
        <strain>Bristol N2</strain>
    </source>
</reference>
<sequence length="412" mass="45111">MIIPMLRILLIVLFVLNLVTSKGVLRKVSGDAAPDKAQEPIDDNEEYDDFIPTIDSSVRLDNTIPVPPALPIGLPIIQITTKEPQPPASLTSLPAAPPSAQVAPPAIRPPEAKRTSLEPPQPSTPQASISSTTTVLIRNPTTSIQQLRGPFDDVRVTTVNIGEIVPDTGNDLGEFRKADLSDNMEKEGNENVKDLVKKTTTVNVTNDYYITSSSPTTVMFELQEDTVGEENVFDFDKLFDKKIYIRNDGSTTENTTEQSTTEKSKTTSTYSTTTTAPVNTTSAPTTTHLGTPGTHKKTCIHVKDLKMVDDSVVVQAGTKKGTIEVSVELGEGDDDEENDDDSSEEEETKPPARHVREDKKPVVWKKFEMNCDEEEDDKGKICKLWAAGGLCGTHKPTMFLFCRKTCLCVGPY</sequence>
<keyword id="KW-1185">Reference proteome</keyword>
<keyword id="KW-0732">Signal</keyword>
<proteinExistence type="inferred from homology"/>
<evidence type="ECO:0000255" key="1"/>
<evidence type="ECO:0000255" key="2">
    <source>
        <dbReference type="PROSITE-ProRule" id="PRU01005"/>
    </source>
</evidence>
<evidence type="ECO:0000256" key="3">
    <source>
        <dbReference type="SAM" id="MobiDB-lite"/>
    </source>
</evidence>
<feature type="signal peptide" evidence="1">
    <location>
        <begin position="1"/>
        <end position="21"/>
    </location>
</feature>
<feature type="chain" id="PRO_0000014306" description="Uncharacterized protein ZK1290.10">
    <location>
        <begin position="22"/>
        <end position="412"/>
    </location>
</feature>
<feature type="domain" description="ShKT" evidence="2">
    <location>
        <begin position="371"/>
        <end position="408"/>
    </location>
</feature>
<feature type="region of interest" description="Disordered" evidence="3">
    <location>
        <begin position="85"/>
        <end position="134"/>
    </location>
</feature>
<feature type="region of interest" description="Disordered" evidence="3">
    <location>
        <begin position="250"/>
        <end position="294"/>
    </location>
</feature>
<feature type="region of interest" description="Disordered" evidence="3">
    <location>
        <begin position="327"/>
        <end position="357"/>
    </location>
</feature>
<feature type="compositionally biased region" description="Low complexity" evidence="3">
    <location>
        <begin position="88"/>
        <end position="105"/>
    </location>
</feature>
<feature type="compositionally biased region" description="Polar residues" evidence="3">
    <location>
        <begin position="124"/>
        <end position="134"/>
    </location>
</feature>
<feature type="compositionally biased region" description="Low complexity" evidence="3">
    <location>
        <begin position="250"/>
        <end position="259"/>
    </location>
</feature>
<feature type="compositionally biased region" description="Low complexity" evidence="3">
    <location>
        <begin position="266"/>
        <end position="293"/>
    </location>
</feature>
<feature type="compositionally biased region" description="Acidic residues" evidence="3">
    <location>
        <begin position="330"/>
        <end position="347"/>
    </location>
</feature>
<feature type="compositionally biased region" description="Basic and acidic residues" evidence="3">
    <location>
        <begin position="348"/>
        <end position="357"/>
    </location>
</feature>
<gene>
    <name type="ORF">ZK1290.10</name>
</gene>